<reference key="1">
    <citation type="journal article" date="2008" name="J. Bacteriol.">
        <title>Insights into the environmental resistance gene pool from the genome sequence of the multidrug-resistant environmental isolate Escherichia coli SMS-3-5.</title>
        <authorList>
            <person name="Fricke W.F."/>
            <person name="Wright M.S."/>
            <person name="Lindell A.H."/>
            <person name="Harkins D.M."/>
            <person name="Baker-Austin C."/>
            <person name="Ravel J."/>
            <person name="Stepanauskas R."/>
        </authorList>
    </citation>
    <scope>NUCLEOTIDE SEQUENCE [LARGE SCALE GENOMIC DNA]</scope>
    <source>
        <strain>SMS-3-5 / SECEC</strain>
    </source>
</reference>
<keyword id="KW-0012">Acyltransferase</keyword>
<keyword id="KW-0067">ATP-binding</keyword>
<keyword id="KW-0997">Cell inner membrane</keyword>
<keyword id="KW-1003">Cell membrane</keyword>
<keyword id="KW-0436">Ligase</keyword>
<keyword id="KW-0472">Membrane</keyword>
<keyword id="KW-0511">Multifunctional enzyme</keyword>
<keyword id="KW-0547">Nucleotide-binding</keyword>
<keyword id="KW-0808">Transferase</keyword>
<keyword id="KW-0812">Transmembrane</keyword>
<keyword id="KW-1133">Transmembrane helix</keyword>
<comment type="function">
    <text evidence="1">Plays a role in lysophospholipid acylation. Transfers fatty acids to the 1-position via an enzyme-bound acyl-ACP intermediate in the presence of ATP and magnesium. Its physiological function is to regenerate phosphatidylethanolamine from 2-acyl-glycero-3-phosphoethanolamine (2-acyl-GPE) formed by transacylation reactions or degradation by phospholipase A1.</text>
</comment>
<comment type="catalytic activity">
    <reaction evidence="1">
        <text>a 2-acyl-sn-glycero-3-phosphoethanolamine + a fatty acyl-[ACP] = a 1,2-diacyl-sn-glycero-3-phosphoethanolamine + holo-[ACP]</text>
        <dbReference type="Rhea" id="RHEA:10304"/>
        <dbReference type="Rhea" id="RHEA-COMP:9685"/>
        <dbReference type="Rhea" id="RHEA-COMP:14125"/>
        <dbReference type="ChEBI" id="CHEBI:64479"/>
        <dbReference type="ChEBI" id="CHEBI:64612"/>
        <dbReference type="ChEBI" id="CHEBI:65213"/>
        <dbReference type="ChEBI" id="CHEBI:138651"/>
        <dbReference type="EC" id="2.3.1.40"/>
    </reaction>
</comment>
<comment type="catalytic activity">
    <reaction evidence="1">
        <text>a long-chain fatty acid + holo-[ACP] + ATP = a long-chain fatty acyl-[ACP] + AMP + diphosphate</text>
        <dbReference type="Rhea" id="RHEA:45588"/>
        <dbReference type="Rhea" id="RHEA-COMP:9685"/>
        <dbReference type="Rhea" id="RHEA-COMP:12682"/>
        <dbReference type="ChEBI" id="CHEBI:30616"/>
        <dbReference type="ChEBI" id="CHEBI:33019"/>
        <dbReference type="ChEBI" id="CHEBI:57560"/>
        <dbReference type="ChEBI" id="CHEBI:64479"/>
        <dbReference type="ChEBI" id="CHEBI:133243"/>
        <dbReference type="ChEBI" id="CHEBI:456215"/>
        <dbReference type="EC" id="6.2.1.20"/>
    </reaction>
</comment>
<comment type="subcellular location">
    <subcellularLocation>
        <location evidence="1">Cell inner membrane</location>
        <topology evidence="1">Multi-pass membrane protein</topology>
    </subcellularLocation>
</comment>
<comment type="similarity">
    <text evidence="1">In the N-terminal section; belongs to the 2-acyl-GPE acetyltransferase family.</text>
</comment>
<comment type="similarity">
    <text evidence="1">In the C-terminal section; belongs to the ATP-dependent AMP-binding enzyme family.</text>
</comment>
<name>AAS_ECOSM</name>
<organism>
    <name type="scientific">Escherichia coli (strain SMS-3-5 / SECEC)</name>
    <dbReference type="NCBI Taxonomy" id="439855"/>
    <lineage>
        <taxon>Bacteria</taxon>
        <taxon>Pseudomonadati</taxon>
        <taxon>Pseudomonadota</taxon>
        <taxon>Gammaproteobacteria</taxon>
        <taxon>Enterobacterales</taxon>
        <taxon>Enterobacteriaceae</taxon>
        <taxon>Escherichia</taxon>
    </lineage>
</organism>
<evidence type="ECO:0000255" key="1">
    <source>
        <dbReference type="HAMAP-Rule" id="MF_01162"/>
    </source>
</evidence>
<sequence>MLFSFFRNLCRVLYRVRVTGDTQALKGERVLITPNHVSFIDGILLALFLPVRPVFAVYTSISQQWYMRWLKSFIDFVPLDPTQPMAIKHLVRLVEQGRPVVIFPEGRITTTGSLMKIYDGAGFVAAKSGATVIPVRIEGAELTHFSRLKGLVKRRLFPQITLHILPPTQVEMPDAPRARDRRKIAGEMLHQIMMEARMAVRPRETLYESLLSAMYRFGAGKKCVEDVNFTPDSYRKLLTKTLFVGRILEKYSVEGEHIGLMLPNAGISAAVIFGAIARRRIPAMMNYTAGVKGLTSAITAAEIKTIFTSRQFLDKGKLWHLPEQLTQVRWVYLEDLKADVTTADKVWIFAHLLMPRLAQVKQQPEEEALILFTSGSEGHPKGVVHSHKSILANVEQIKTIADFTTNDRFMSALPLFHSFGLTVGLFTPLLTGAEVFLYPSPLHYRIVPELVYDRSCTVLFGTSTFLGHYARFANPYDFYRLRYVVAGAEKLQESTKQLWQDKFGLRILEGYGVTECAPVVSINVPMAAKPGTVGRILPGMDARLLSVPGIEEGGRLQLKGPNIMNGYLRVEKPGVLEVPTAENVRGEMERGWYDTGDIVRFDEQGFVQIQGRAKRFAKIAGEMVSLEMVEQLALGVSPDKVHATAIKSDASKGEALVLFTTDNELTRDKLQQYAREHGVPELAVPRDIRYLKQMPLLGSGKPDFVTLKSWVDEAEQHDE</sequence>
<accession>B1LR34</accession>
<proteinExistence type="inferred from homology"/>
<gene>
    <name evidence="1" type="primary">aas</name>
    <name type="ordered locus">EcSMS35_2984</name>
</gene>
<dbReference type="EC" id="2.3.1.40" evidence="1"/>
<dbReference type="EC" id="6.2.1.20" evidence="1"/>
<dbReference type="EMBL" id="CP000970">
    <property type="protein sequence ID" value="ACB19611.1"/>
    <property type="molecule type" value="Genomic_DNA"/>
</dbReference>
<dbReference type="RefSeq" id="WP_000899036.1">
    <property type="nucleotide sequence ID" value="NC_010498.1"/>
</dbReference>
<dbReference type="SMR" id="B1LR34"/>
<dbReference type="KEGG" id="ecm:EcSMS35_2984"/>
<dbReference type="HOGENOM" id="CLU_000022_59_8_6"/>
<dbReference type="Proteomes" id="UP000007011">
    <property type="component" value="Chromosome"/>
</dbReference>
<dbReference type="GO" id="GO:0005886">
    <property type="term" value="C:plasma membrane"/>
    <property type="evidence" value="ECO:0007669"/>
    <property type="project" value="UniProtKB-SubCell"/>
</dbReference>
<dbReference type="GO" id="GO:0008779">
    <property type="term" value="F:acyl-[acyl-carrier-protein]-phospholipid O-acyltransferase activity"/>
    <property type="evidence" value="ECO:0007669"/>
    <property type="project" value="UniProtKB-UniRule"/>
</dbReference>
<dbReference type="GO" id="GO:0005524">
    <property type="term" value="F:ATP binding"/>
    <property type="evidence" value="ECO:0007669"/>
    <property type="project" value="UniProtKB-KW"/>
</dbReference>
<dbReference type="GO" id="GO:0008922">
    <property type="term" value="F:long-chain fatty acid [acyl-carrier-protein] ligase activity"/>
    <property type="evidence" value="ECO:0007669"/>
    <property type="project" value="UniProtKB-UniRule"/>
</dbReference>
<dbReference type="GO" id="GO:0031956">
    <property type="term" value="F:medium-chain fatty acid-CoA ligase activity"/>
    <property type="evidence" value="ECO:0007669"/>
    <property type="project" value="TreeGrafter"/>
</dbReference>
<dbReference type="GO" id="GO:0006631">
    <property type="term" value="P:fatty acid metabolic process"/>
    <property type="evidence" value="ECO:0007669"/>
    <property type="project" value="InterPro"/>
</dbReference>
<dbReference type="GO" id="GO:0008654">
    <property type="term" value="P:phospholipid biosynthetic process"/>
    <property type="evidence" value="ECO:0007669"/>
    <property type="project" value="InterPro"/>
</dbReference>
<dbReference type="CDD" id="cd05909">
    <property type="entry name" value="AAS_C"/>
    <property type="match status" value="1"/>
</dbReference>
<dbReference type="CDD" id="cd07989">
    <property type="entry name" value="LPLAT_AGPAT-like"/>
    <property type="match status" value="1"/>
</dbReference>
<dbReference type="FunFam" id="3.30.300.30:FF:000009">
    <property type="entry name" value="Bifunctional protein Aas"/>
    <property type="match status" value="1"/>
</dbReference>
<dbReference type="FunFam" id="3.40.50.12780:FF:000009">
    <property type="entry name" value="Bifunctional protein Aas"/>
    <property type="match status" value="1"/>
</dbReference>
<dbReference type="Gene3D" id="3.30.300.30">
    <property type="match status" value="1"/>
</dbReference>
<dbReference type="Gene3D" id="3.40.50.12780">
    <property type="entry name" value="N-terminal domain of ligase-like"/>
    <property type="match status" value="1"/>
</dbReference>
<dbReference type="HAMAP" id="MF_01162">
    <property type="entry name" value="Aas"/>
    <property type="match status" value="1"/>
</dbReference>
<dbReference type="InterPro" id="IPR023775">
    <property type="entry name" value="Aas"/>
</dbReference>
<dbReference type="InterPro" id="IPR045851">
    <property type="entry name" value="AMP-bd_C_sf"/>
</dbReference>
<dbReference type="InterPro" id="IPR020845">
    <property type="entry name" value="AMP-binding_CS"/>
</dbReference>
<dbReference type="InterPro" id="IPR000873">
    <property type="entry name" value="AMP-dep_synth/lig_dom"/>
</dbReference>
<dbReference type="InterPro" id="IPR042099">
    <property type="entry name" value="ANL_N_sf"/>
</dbReference>
<dbReference type="InterPro" id="IPR002123">
    <property type="entry name" value="Plipid/glycerol_acylTrfase"/>
</dbReference>
<dbReference type="NCBIfam" id="NF005959">
    <property type="entry name" value="PRK08043.1"/>
    <property type="match status" value="1"/>
</dbReference>
<dbReference type="PANTHER" id="PTHR43201">
    <property type="entry name" value="ACYL-COA SYNTHETASE"/>
    <property type="match status" value="1"/>
</dbReference>
<dbReference type="PANTHER" id="PTHR43201:SF8">
    <property type="entry name" value="ACYL-COA SYNTHETASE FAMILY MEMBER 3"/>
    <property type="match status" value="1"/>
</dbReference>
<dbReference type="Pfam" id="PF01553">
    <property type="entry name" value="Acyltransferase"/>
    <property type="match status" value="1"/>
</dbReference>
<dbReference type="Pfam" id="PF00501">
    <property type="entry name" value="AMP-binding"/>
    <property type="match status" value="1"/>
</dbReference>
<dbReference type="SMART" id="SM00563">
    <property type="entry name" value="PlsC"/>
    <property type="match status" value="1"/>
</dbReference>
<dbReference type="SUPFAM" id="SSF56801">
    <property type="entry name" value="Acetyl-CoA synthetase-like"/>
    <property type="match status" value="1"/>
</dbReference>
<dbReference type="SUPFAM" id="SSF69593">
    <property type="entry name" value="Glycerol-3-phosphate (1)-acyltransferase"/>
    <property type="match status" value="1"/>
</dbReference>
<dbReference type="PROSITE" id="PS00455">
    <property type="entry name" value="AMP_BINDING"/>
    <property type="match status" value="1"/>
</dbReference>
<protein>
    <recommendedName>
        <fullName evidence="1">Bifunctional protein Aas</fullName>
    </recommendedName>
    <domain>
        <recommendedName>
            <fullName evidence="1">2-acylglycerophosphoethanolamine acyltransferase</fullName>
            <ecNumber evidence="1">2.3.1.40</ecNumber>
        </recommendedName>
        <alternativeName>
            <fullName evidence="1">2-acyl-GPE acyltransferase</fullName>
        </alternativeName>
        <alternativeName>
            <fullName evidence="1">Acyl-[acyl-carrier-protein]--phospholipid O-acyltransferase</fullName>
        </alternativeName>
    </domain>
    <domain>
        <recommendedName>
            <fullName evidence="1">Acyl-[acyl-carrier-protein] synthetase</fullName>
            <ecNumber evidence="1">6.2.1.20</ecNumber>
        </recommendedName>
        <alternativeName>
            <fullName evidence="1">Acyl-ACP synthetase</fullName>
        </alternativeName>
        <alternativeName>
            <fullName evidence="1">Long-chain-fatty-acid--[acyl-carrier-protein] ligase</fullName>
        </alternativeName>
    </domain>
</protein>
<feature type="chain" id="PRO_1000137891" description="Bifunctional protein Aas">
    <location>
        <begin position="1"/>
        <end position="719"/>
    </location>
</feature>
<feature type="transmembrane region" description="Helical" evidence="1">
    <location>
        <begin position="258"/>
        <end position="277"/>
    </location>
</feature>
<feature type="transmembrane region" description="Helical" evidence="1">
    <location>
        <begin position="409"/>
        <end position="433"/>
    </location>
</feature>
<feature type="region of interest" description="Acyltransferase">
    <location>
        <begin position="15"/>
        <end position="138"/>
    </location>
</feature>
<feature type="region of interest" description="AMP-binding">
    <location>
        <begin position="233"/>
        <end position="646"/>
    </location>
</feature>
<feature type="active site" evidence="1">
    <location>
        <position position="36"/>
    </location>
</feature>